<feature type="chain" id="PRO_0000342677" description="Prospero homeobox protein 2">
    <location>
        <begin position="1"/>
        <end position="592"/>
    </location>
</feature>
<feature type="domain" description="Prospero-type homeo" evidence="2">
    <location>
        <begin position="437"/>
        <end position="495"/>
    </location>
</feature>
<feature type="domain" description="Prospero" evidence="2">
    <location>
        <begin position="496"/>
        <end position="592"/>
    </location>
</feature>
<feature type="region of interest" description="Disordered" evidence="3">
    <location>
        <begin position="20"/>
        <end position="56"/>
    </location>
</feature>
<feature type="region of interest" description="Disordered" evidence="3">
    <location>
        <begin position="85"/>
        <end position="129"/>
    </location>
</feature>
<feature type="region of interest" description="Disordered" evidence="3">
    <location>
        <begin position="155"/>
        <end position="218"/>
    </location>
</feature>
<feature type="region of interest" description="Disordered" evidence="3">
    <location>
        <begin position="308"/>
        <end position="336"/>
    </location>
</feature>
<feature type="region of interest" description="Disordered" evidence="3">
    <location>
        <begin position="353"/>
        <end position="382"/>
    </location>
</feature>
<feature type="region of interest" description="Homeo-Prospero" evidence="2">
    <location>
        <begin position="437"/>
        <end position="592"/>
    </location>
</feature>
<feature type="compositionally biased region" description="Basic residues" evidence="3">
    <location>
        <begin position="95"/>
        <end position="106"/>
    </location>
</feature>
<feature type="compositionally biased region" description="Basic and acidic residues" evidence="3">
    <location>
        <begin position="201"/>
        <end position="211"/>
    </location>
</feature>
<feature type="compositionally biased region" description="Pro residues" evidence="3">
    <location>
        <begin position="314"/>
        <end position="331"/>
    </location>
</feature>
<feature type="compositionally biased region" description="Low complexity" evidence="3">
    <location>
        <begin position="360"/>
        <end position="377"/>
    </location>
</feature>
<feature type="splice variant" id="VSP_034528" description="In isoform 2." evidence="5">
    <location>
        <begin position="245"/>
        <end position="471"/>
    </location>
</feature>
<feature type="sequence variant" id="VAR_069378" description="Found in a patient with intellectual disability, seizures, mild hypotonia and no speech." evidence="4">
    <original>R</original>
    <variation>H</variation>
    <location>
        <position position="474"/>
    </location>
</feature>
<feature type="sequence conflict" description="In Ref. 2; AAI05721/AAI05928." evidence="6" ref="2">
    <original>L</original>
    <variation>V</variation>
    <location>
        <position position="434"/>
    </location>
</feature>
<feature type="sequence conflict" description="In Ref. 3; BAC04278." evidence="6" ref="3">
    <original>N</original>
    <variation>D</variation>
    <location>
        <position position="509"/>
    </location>
</feature>
<feature type="sequence conflict" description="In Ref. 3; BAC04278." evidence="6" ref="3">
    <original>K</original>
    <variation>E</variation>
    <location>
        <position position="511"/>
    </location>
</feature>
<evidence type="ECO:0000250" key="1"/>
<evidence type="ECO:0000255" key="2">
    <source>
        <dbReference type="PROSITE-ProRule" id="PRU01162"/>
    </source>
</evidence>
<evidence type="ECO:0000256" key="3">
    <source>
        <dbReference type="SAM" id="MobiDB-lite"/>
    </source>
</evidence>
<evidence type="ECO:0000269" key="4">
    <source>
    </source>
</evidence>
<evidence type="ECO:0000303" key="5">
    <source>
    </source>
</evidence>
<evidence type="ECO:0000305" key="6"/>
<gene>
    <name type="primary">PROX2</name>
</gene>
<comment type="function">
    <text evidence="1">Transcription regulator. Does not seem to be essential for embryonic development and postnatal survival (By similarity).</text>
</comment>
<comment type="subcellular location">
    <subcellularLocation>
        <location evidence="6">Nucleus</location>
    </subcellularLocation>
</comment>
<comment type="alternative products">
    <event type="alternative splicing"/>
    <isoform>
        <id>Q3B8N5-1</id>
        <name>1</name>
        <sequence type="displayed"/>
    </isoform>
    <isoform>
        <id>Q3B8N5-2</id>
        <name>2</name>
        <sequence type="described" ref="VSP_034528"/>
    </isoform>
</comment>
<comment type="domain">
    <text evidence="2">The Prospero-type homeodomain and the adjacent Prospero domain act as a single structural unit, the Homeo-Prospero domain.</text>
</comment>
<comment type="similarity">
    <text evidence="2">Belongs to the Prospero homeodomain family.</text>
</comment>
<comment type="sequence caution" evidence="6">
    <conflict type="erroneous initiation">
        <sequence resource="EMBL-CDS" id="BAC04278"/>
    </conflict>
    <text>Truncated N-terminus.</text>
</comment>
<proteinExistence type="evidence at transcript level"/>
<protein>
    <recommendedName>
        <fullName>Prospero homeobox protein 2</fullName>
    </recommendedName>
    <alternativeName>
        <fullName>Homeobox prospero-like protein PROX2</fullName>
        <shortName>PROX-2</shortName>
    </alternativeName>
</protein>
<sequence length="592" mass="65586">MDPNSILLSPQPQICSHLAEACTEGERSSSPPELDRDSPFPWSQVPSSSPTDPEWFGDEHIQAKRARVETIVRGMCLSPNPLVPGNAQAGVSPRCPKKARERKRKQNLPTPQGLLMPAPAWDQGNRKGGPRVREQLHLLKQQLRHLQEHILQAAKPRDTAQGPGGCGTGKGPLSAKQGNGCGPRPWVVDGDHQQGTSKDLSGAEKHQESEKPSFLPSGAPASLEILRKELTRAVSQAVDSVLQKVLLDPPGHLTQLGRSFQGQVAEGRSEPSPPVGGACKDPLALAALPRRVQLQAGVPVGNLSLAKRLDSPRYPIPPRMTPKPCQDPPANFPLTAPSHIQENQILSQLLGHRYNNGHWSSSPPQDSSSQRHPSSEPALRPWRTTKPQPLVLSQQQCPLPFTSAHLESLPLLPSVKMEQRGLHAVMEALPFSLLHIQEGLNPGHLKKAKLMFFFTRYPSSNLLKVYFPDVQFNRCITSQMIKWFSNFREFYYIQMEKSARQAISDGVTNPKMLVVLRNSELFQALNMHYNKGNDFEVPDCFLEIASLTLQEFFRAVSAGRDSDPSWKKPIYKIISKLDSDIPEIFKSSSYPQ</sequence>
<name>PROX2_HUMAN</name>
<accession>Q3B8N5</accession>
<accession>C9J5W1</accession>
<accession>Q8N9Q3</accession>
<keyword id="KW-0025">Alternative splicing</keyword>
<keyword id="KW-0238">DNA-binding</keyword>
<keyword id="KW-0371">Homeobox</keyword>
<keyword id="KW-0539">Nucleus</keyword>
<keyword id="KW-1185">Reference proteome</keyword>
<keyword id="KW-0804">Transcription</keyword>
<keyword id="KW-0805">Transcription regulation</keyword>
<reference key="1">
    <citation type="journal article" date="2003" name="Nature">
        <title>The DNA sequence and analysis of human chromosome 14.</title>
        <authorList>
            <person name="Heilig R."/>
            <person name="Eckenberg R."/>
            <person name="Petit J.-L."/>
            <person name="Fonknechten N."/>
            <person name="Da Silva C."/>
            <person name="Cattolico L."/>
            <person name="Levy M."/>
            <person name="Barbe V."/>
            <person name="De Berardinis V."/>
            <person name="Ureta-Vidal A."/>
            <person name="Pelletier E."/>
            <person name="Vico V."/>
            <person name="Anthouard V."/>
            <person name="Rowen L."/>
            <person name="Madan A."/>
            <person name="Qin S."/>
            <person name="Sun H."/>
            <person name="Du H."/>
            <person name="Pepin K."/>
            <person name="Artiguenave F."/>
            <person name="Robert C."/>
            <person name="Cruaud C."/>
            <person name="Bruels T."/>
            <person name="Jaillon O."/>
            <person name="Friedlander L."/>
            <person name="Samson G."/>
            <person name="Brottier P."/>
            <person name="Cure S."/>
            <person name="Segurens B."/>
            <person name="Aniere F."/>
            <person name="Samain S."/>
            <person name="Crespeau H."/>
            <person name="Abbasi N."/>
            <person name="Aiach N."/>
            <person name="Boscus D."/>
            <person name="Dickhoff R."/>
            <person name="Dors M."/>
            <person name="Dubois I."/>
            <person name="Friedman C."/>
            <person name="Gouyvenoux M."/>
            <person name="James R."/>
            <person name="Madan A."/>
            <person name="Mairey-Estrada B."/>
            <person name="Mangenot S."/>
            <person name="Martins N."/>
            <person name="Menard M."/>
            <person name="Oztas S."/>
            <person name="Ratcliffe A."/>
            <person name="Shaffer T."/>
            <person name="Trask B."/>
            <person name="Vacherie B."/>
            <person name="Bellemere C."/>
            <person name="Belser C."/>
            <person name="Besnard-Gonnet M."/>
            <person name="Bartol-Mavel D."/>
            <person name="Boutard M."/>
            <person name="Briez-Silla S."/>
            <person name="Combette S."/>
            <person name="Dufosse-Laurent V."/>
            <person name="Ferron C."/>
            <person name="Lechaplais C."/>
            <person name="Louesse C."/>
            <person name="Muselet D."/>
            <person name="Magdelenat G."/>
            <person name="Pateau E."/>
            <person name="Petit E."/>
            <person name="Sirvain-Trukniewicz P."/>
            <person name="Trybou A."/>
            <person name="Vega-Czarny N."/>
            <person name="Bataille E."/>
            <person name="Bluet E."/>
            <person name="Bordelais I."/>
            <person name="Dubois M."/>
            <person name="Dumont C."/>
            <person name="Guerin T."/>
            <person name="Haffray S."/>
            <person name="Hammadi R."/>
            <person name="Muanga J."/>
            <person name="Pellouin V."/>
            <person name="Robert D."/>
            <person name="Wunderle E."/>
            <person name="Gauguet G."/>
            <person name="Roy A."/>
            <person name="Sainte-Marthe L."/>
            <person name="Verdier J."/>
            <person name="Verdier-Discala C."/>
            <person name="Hillier L.W."/>
            <person name="Fulton L."/>
            <person name="McPherson J."/>
            <person name="Matsuda F."/>
            <person name="Wilson R."/>
            <person name="Scarpelli C."/>
            <person name="Gyapay G."/>
            <person name="Wincker P."/>
            <person name="Saurin W."/>
            <person name="Quetier F."/>
            <person name="Waterston R."/>
            <person name="Hood L."/>
            <person name="Weissenbach J."/>
        </authorList>
    </citation>
    <scope>NUCLEOTIDE SEQUENCE [LARGE SCALE GENOMIC DNA]</scope>
</reference>
<reference key="2">
    <citation type="journal article" date="2004" name="Genome Res.">
        <title>The status, quality, and expansion of the NIH full-length cDNA project: the Mammalian Gene Collection (MGC).</title>
        <authorList>
            <consortium name="The MGC Project Team"/>
        </authorList>
    </citation>
    <scope>NUCLEOTIDE SEQUENCE [LARGE SCALE MRNA] OF 2-592 (ISOFORM 1)</scope>
</reference>
<reference key="3">
    <citation type="journal article" date="2004" name="Nat. Genet.">
        <title>Complete sequencing and characterization of 21,243 full-length human cDNAs.</title>
        <authorList>
            <person name="Ota T."/>
            <person name="Suzuki Y."/>
            <person name="Nishikawa T."/>
            <person name="Otsuki T."/>
            <person name="Sugiyama T."/>
            <person name="Irie R."/>
            <person name="Wakamatsu A."/>
            <person name="Hayashi K."/>
            <person name="Sato H."/>
            <person name="Nagai K."/>
            <person name="Kimura K."/>
            <person name="Makita H."/>
            <person name="Sekine M."/>
            <person name="Obayashi M."/>
            <person name="Nishi T."/>
            <person name="Shibahara T."/>
            <person name="Tanaka T."/>
            <person name="Ishii S."/>
            <person name="Yamamoto J."/>
            <person name="Saito K."/>
            <person name="Kawai Y."/>
            <person name="Isono Y."/>
            <person name="Nakamura Y."/>
            <person name="Nagahari K."/>
            <person name="Murakami K."/>
            <person name="Yasuda T."/>
            <person name="Iwayanagi T."/>
            <person name="Wagatsuma M."/>
            <person name="Shiratori A."/>
            <person name="Sudo H."/>
            <person name="Hosoiri T."/>
            <person name="Kaku Y."/>
            <person name="Kodaira H."/>
            <person name="Kondo H."/>
            <person name="Sugawara M."/>
            <person name="Takahashi M."/>
            <person name="Kanda K."/>
            <person name="Yokoi T."/>
            <person name="Furuya T."/>
            <person name="Kikkawa E."/>
            <person name="Omura Y."/>
            <person name="Abe K."/>
            <person name="Kamihara K."/>
            <person name="Katsuta N."/>
            <person name="Sato K."/>
            <person name="Tanikawa M."/>
            <person name="Yamazaki M."/>
            <person name="Ninomiya K."/>
            <person name="Ishibashi T."/>
            <person name="Yamashita H."/>
            <person name="Murakawa K."/>
            <person name="Fujimori K."/>
            <person name="Tanai H."/>
            <person name="Kimata M."/>
            <person name="Watanabe M."/>
            <person name="Hiraoka S."/>
            <person name="Chiba Y."/>
            <person name="Ishida S."/>
            <person name="Ono Y."/>
            <person name="Takiguchi S."/>
            <person name="Watanabe S."/>
            <person name="Yosida M."/>
            <person name="Hotuta T."/>
            <person name="Kusano J."/>
            <person name="Kanehori K."/>
            <person name="Takahashi-Fujii A."/>
            <person name="Hara H."/>
            <person name="Tanase T.-O."/>
            <person name="Nomura Y."/>
            <person name="Togiya S."/>
            <person name="Komai F."/>
            <person name="Hara R."/>
            <person name="Takeuchi K."/>
            <person name="Arita M."/>
            <person name="Imose N."/>
            <person name="Musashino K."/>
            <person name="Yuuki H."/>
            <person name="Oshima A."/>
            <person name="Sasaki N."/>
            <person name="Aotsuka S."/>
            <person name="Yoshikawa Y."/>
            <person name="Matsunawa H."/>
            <person name="Ichihara T."/>
            <person name="Shiohata N."/>
            <person name="Sano S."/>
            <person name="Moriya S."/>
            <person name="Momiyama H."/>
            <person name="Satoh N."/>
            <person name="Takami S."/>
            <person name="Terashima Y."/>
            <person name="Suzuki O."/>
            <person name="Nakagawa S."/>
            <person name="Senoh A."/>
            <person name="Mizoguchi H."/>
            <person name="Goto Y."/>
            <person name="Shimizu F."/>
            <person name="Wakebe H."/>
            <person name="Hishigaki H."/>
            <person name="Watanabe T."/>
            <person name="Sugiyama A."/>
            <person name="Takemoto M."/>
            <person name="Kawakami B."/>
            <person name="Yamazaki M."/>
            <person name="Watanabe K."/>
            <person name="Kumagai A."/>
            <person name="Itakura S."/>
            <person name="Fukuzumi Y."/>
            <person name="Fujimori Y."/>
            <person name="Komiyama M."/>
            <person name="Tashiro H."/>
            <person name="Tanigami A."/>
            <person name="Fujiwara T."/>
            <person name="Ono T."/>
            <person name="Yamada K."/>
            <person name="Fujii Y."/>
            <person name="Ozaki K."/>
            <person name="Hirao M."/>
            <person name="Ohmori Y."/>
            <person name="Kawabata A."/>
            <person name="Hikiji T."/>
            <person name="Kobatake N."/>
            <person name="Inagaki H."/>
            <person name="Ikema Y."/>
            <person name="Okamoto S."/>
            <person name="Okitani R."/>
            <person name="Kawakami T."/>
            <person name="Noguchi S."/>
            <person name="Itoh T."/>
            <person name="Shigeta K."/>
            <person name="Senba T."/>
            <person name="Matsumura K."/>
            <person name="Nakajima Y."/>
            <person name="Mizuno T."/>
            <person name="Morinaga M."/>
            <person name="Sasaki M."/>
            <person name="Togashi T."/>
            <person name="Oyama M."/>
            <person name="Hata H."/>
            <person name="Watanabe M."/>
            <person name="Komatsu T."/>
            <person name="Mizushima-Sugano J."/>
            <person name="Satoh T."/>
            <person name="Shirai Y."/>
            <person name="Takahashi Y."/>
            <person name="Nakagawa K."/>
            <person name="Okumura K."/>
            <person name="Nagase T."/>
            <person name="Nomura N."/>
            <person name="Kikuchi H."/>
            <person name="Masuho Y."/>
            <person name="Yamashita R."/>
            <person name="Nakai K."/>
            <person name="Yada T."/>
            <person name="Nakamura Y."/>
            <person name="Ohara O."/>
            <person name="Isogai T."/>
            <person name="Sugano S."/>
        </authorList>
    </citation>
    <scope>NUCLEOTIDE SEQUENCE [LARGE SCALE MRNA] OF 107-592 (ISOFORM 2)</scope>
    <source>
        <tissue>Uterus</tissue>
    </source>
</reference>
<reference key="4">
    <citation type="journal article" date="2012" name="N. Engl. J. Med.">
        <title>Diagnostic exome sequencing in persons with severe intellectual disability.</title>
        <authorList>
            <person name="de Ligt J."/>
            <person name="Willemsen M.H."/>
            <person name="van Bon B.W."/>
            <person name="Kleefstra T."/>
            <person name="Yntema H.G."/>
            <person name="Kroes T."/>
            <person name="Vulto-van Silfhout A.T."/>
            <person name="Koolen D.A."/>
            <person name="de Vries P."/>
            <person name="Gilissen C."/>
            <person name="del Rosario M."/>
            <person name="Hoischen A."/>
            <person name="Scheffer H."/>
            <person name="de Vries B.B."/>
            <person name="Brunner H.G."/>
            <person name="Veltman J.A."/>
            <person name="Vissers L.E."/>
        </authorList>
    </citation>
    <scope>VARIANT HIS-474</scope>
</reference>
<organism>
    <name type="scientific">Homo sapiens</name>
    <name type="common">Human</name>
    <dbReference type="NCBI Taxonomy" id="9606"/>
    <lineage>
        <taxon>Eukaryota</taxon>
        <taxon>Metazoa</taxon>
        <taxon>Chordata</taxon>
        <taxon>Craniata</taxon>
        <taxon>Vertebrata</taxon>
        <taxon>Euteleostomi</taxon>
        <taxon>Mammalia</taxon>
        <taxon>Eutheria</taxon>
        <taxon>Euarchontoglires</taxon>
        <taxon>Primates</taxon>
        <taxon>Haplorrhini</taxon>
        <taxon>Catarrhini</taxon>
        <taxon>Hominidae</taxon>
        <taxon>Homo</taxon>
    </lineage>
</organism>
<dbReference type="EMBL" id="AC006530">
    <property type="status" value="NOT_ANNOTATED_CDS"/>
    <property type="molecule type" value="Genomic_DNA"/>
</dbReference>
<dbReference type="EMBL" id="BC105720">
    <property type="protein sequence ID" value="AAI05721.1"/>
    <property type="molecule type" value="mRNA"/>
</dbReference>
<dbReference type="EMBL" id="BC105927">
    <property type="protein sequence ID" value="AAI05928.1"/>
    <property type="molecule type" value="mRNA"/>
</dbReference>
<dbReference type="EMBL" id="AK094068">
    <property type="protein sequence ID" value="BAC04278.1"/>
    <property type="status" value="ALT_INIT"/>
    <property type="molecule type" value="mRNA"/>
</dbReference>
<dbReference type="CCDS" id="CCDS45136.2">
    <molecule id="Q3B8N5-2"/>
</dbReference>
<dbReference type="CCDS" id="CCDS73663.1">
    <molecule id="Q3B8N5-1"/>
</dbReference>
<dbReference type="RefSeq" id="NP_001073877.2">
    <molecule id="Q3B8N5-2"/>
    <property type="nucleotide sequence ID" value="NM_001080408.3"/>
</dbReference>
<dbReference type="RefSeq" id="NP_001229936.1">
    <property type="nucleotide sequence ID" value="NM_001243007.1"/>
</dbReference>
<dbReference type="RefSeq" id="XP_005267600.1">
    <molecule id="Q3B8N5-1"/>
    <property type="nucleotide sequence ID" value="XM_005267543.5"/>
</dbReference>
<dbReference type="RefSeq" id="XP_054231857.1">
    <molecule id="Q3B8N5-1"/>
    <property type="nucleotide sequence ID" value="XM_054375882.1"/>
</dbReference>
<dbReference type="SMR" id="Q3B8N5"/>
<dbReference type="FunCoup" id="Q3B8N5">
    <property type="interactions" value="96"/>
</dbReference>
<dbReference type="STRING" id="9606.ENSP00000451223"/>
<dbReference type="iPTMnet" id="Q3B8N5"/>
<dbReference type="PhosphoSitePlus" id="Q3B8N5"/>
<dbReference type="BioMuta" id="PROX2"/>
<dbReference type="DMDM" id="296452993"/>
<dbReference type="jPOST" id="Q3B8N5"/>
<dbReference type="MassIVE" id="Q3B8N5"/>
<dbReference type="PaxDb" id="9606-ENSP00000451223"/>
<dbReference type="PeptideAtlas" id="Q3B8N5"/>
<dbReference type="ProteomicsDB" id="61672">
    <molecule id="Q3B8N5-1"/>
</dbReference>
<dbReference type="ProteomicsDB" id="61673">
    <molecule id="Q3B8N5-2"/>
</dbReference>
<dbReference type="Antibodypedia" id="50733">
    <property type="antibodies" value="69 antibodies from 13 providers"/>
</dbReference>
<dbReference type="DNASU" id="283571"/>
<dbReference type="Ensembl" id="ENST00000673765.1">
    <molecule id="Q3B8N5-2"/>
    <property type="protein sequence ID" value="ENSP00000501015.1"/>
    <property type="gene ID" value="ENSG00000119608.15"/>
</dbReference>
<dbReference type="GeneID" id="283571"/>
<dbReference type="KEGG" id="hsa:283571"/>
<dbReference type="UCSC" id="uc001xqq.3">
    <molecule id="Q3B8N5-1"/>
    <property type="organism name" value="human"/>
</dbReference>
<dbReference type="AGR" id="HGNC:26715"/>
<dbReference type="CTD" id="283571"/>
<dbReference type="DisGeNET" id="283571"/>
<dbReference type="GeneCards" id="PROX2"/>
<dbReference type="HGNC" id="HGNC:26715">
    <property type="gene designation" value="PROX2"/>
</dbReference>
<dbReference type="HPA" id="ENSG00000119608">
    <property type="expression patterns" value="Tissue enhanced (bone)"/>
</dbReference>
<dbReference type="MIM" id="615094">
    <property type="type" value="gene"/>
</dbReference>
<dbReference type="neXtProt" id="NX_Q3B8N5"/>
<dbReference type="OpenTargets" id="ENSG00000119608"/>
<dbReference type="PharmGKB" id="PA162400142"/>
<dbReference type="eggNOG" id="KOG3779">
    <property type="taxonomic scope" value="Eukaryota"/>
</dbReference>
<dbReference type="GeneTree" id="ENSGT00940000154790"/>
<dbReference type="HOGENOM" id="CLU_064097_0_0_1"/>
<dbReference type="InParanoid" id="Q3B8N5"/>
<dbReference type="OrthoDB" id="10038576at2759"/>
<dbReference type="PAN-GO" id="Q3B8N5">
    <property type="GO annotations" value="4 GO annotations based on evolutionary models"/>
</dbReference>
<dbReference type="PhylomeDB" id="Q3B8N5"/>
<dbReference type="TreeFam" id="TF316638"/>
<dbReference type="PathwayCommons" id="Q3B8N5"/>
<dbReference type="BioGRID-ORCS" id="283571">
    <property type="hits" value="15 hits in 1169 CRISPR screens"/>
</dbReference>
<dbReference type="GenomeRNAi" id="283571"/>
<dbReference type="Pharos" id="Q3B8N5">
    <property type="development level" value="Tbio"/>
</dbReference>
<dbReference type="PRO" id="PR:Q3B8N5"/>
<dbReference type="Proteomes" id="UP000005640">
    <property type="component" value="Chromosome 14"/>
</dbReference>
<dbReference type="RNAct" id="Q3B8N5">
    <property type="molecule type" value="protein"/>
</dbReference>
<dbReference type="Bgee" id="ENSG00000119608">
    <property type="expression patterns" value="Expressed in male germ line stem cell (sensu Vertebrata) in testis and 92 other cell types or tissues"/>
</dbReference>
<dbReference type="ExpressionAtlas" id="Q3B8N5">
    <property type="expression patterns" value="baseline and differential"/>
</dbReference>
<dbReference type="GO" id="GO:0000785">
    <property type="term" value="C:chromatin"/>
    <property type="evidence" value="ECO:0000247"/>
    <property type="project" value="NTNU_SB"/>
</dbReference>
<dbReference type="GO" id="GO:0005634">
    <property type="term" value="C:nucleus"/>
    <property type="evidence" value="ECO:0000318"/>
    <property type="project" value="GO_Central"/>
</dbReference>
<dbReference type="GO" id="GO:0000981">
    <property type="term" value="F:DNA-binding transcription factor activity, RNA polymerase II-specific"/>
    <property type="evidence" value="ECO:0000247"/>
    <property type="project" value="NTNU_SB"/>
</dbReference>
<dbReference type="GO" id="GO:0000978">
    <property type="term" value="F:RNA polymerase II cis-regulatory region sequence-specific DNA binding"/>
    <property type="evidence" value="ECO:0000318"/>
    <property type="project" value="GO_Central"/>
</dbReference>
<dbReference type="GO" id="GO:0048468">
    <property type="term" value="P:cell development"/>
    <property type="evidence" value="ECO:0007669"/>
    <property type="project" value="UniProtKB-ARBA"/>
</dbReference>
<dbReference type="GO" id="GO:0007399">
    <property type="term" value="P:nervous system development"/>
    <property type="evidence" value="ECO:0007669"/>
    <property type="project" value="UniProtKB-ARBA"/>
</dbReference>
<dbReference type="GO" id="GO:0006357">
    <property type="term" value="P:regulation of transcription by RNA polymerase II"/>
    <property type="evidence" value="ECO:0000318"/>
    <property type="project" value="GO_Central"/>
</dbReference>
<dbReference type="FunFam" id="1.10.10.500:FF:000001">
    <property type="entry name" value="Prospero homeobox protein 1"/>
    <property type="match status" value="1"/>
</dbReference>
<dbReference type="Gene3D" id="1.10.10.500">
    <property type="entry name" value="Homeo-prospero domain"/>
    <property type="match status" value="1"/>
</dbReference>
<dbReference type="InterPro" id="IPR023082">
    <property type="entry name" value="Homeo_prospero_dom"/>
</dbReference>
<dbReference type="InterPro" id="IPR037131">
    <property type="entry name" value="Homeo_prospero_dom_sf"/>
</dbReference>
<dbReference type="InterPro" id="IPR009057">
    <property type="entry name" value="Homeodomain-like_sf"/>
</dbReference>
<dbReference type="InterPro" id="IPR039350">
    <property type="entry name" value="Prospero_homeodomain"/>
</dbReference>
<dbReference type="PANTHER" id="PTHR12198">
    <property type="entry name" value="HOMEOBOX PROTEIN PROSPERO/PROX-1/CEH-26"/>
    <property type="match status" value="1"/>
</dbReference>
<dbReference type="PANTHER" id="PTHR12198:SF5">
    <property type="entry name" value="PROSPERO HOMEOBOX PROTEIN 2"/>
    <property type="match status" value="1"/>
</dbReference>
<dbReference type="Pfam" id="PF05044">
    <property type="entry name" value="HPD"/>
    <property type="match status" value="1"/>
</dbReference>
<dbReference type="SUPFAM" id="SSF46689">
    <property type="entry name" value="Homeodomain-like"/>
    <property type="match status" value="1"/>
</dbReference>
<dbReference type="PROSITE" id="PS51818">
    <property type="entry name" value="HOMEO_PROSPERO"/>
    <property type="match status" value="1"/>
</dbReference>